<organism>
    <name type="scientific">Botryotinia fuckeliana (strain B05.10)</name>
    <name type="common">Noble rot fungus</name>
    <name type="synonym">Botrytis cinerea</name>
    <dbReference type="NCBI Taxonomy" id="332648"/>
    <lineage>
        <taxon>Eukaryota</taxon>
        <taxon>Fungi</taxon>
        <taxon>Dikarya</taxon>
        <taxon>Ascomycota</taxon>
        <taxon>Pezizomycotina</taxon>
        <taxon>Leotiomycetes</taxon>
        <taxon>Helotiales</taxon>
        <taxon>Sclerotiniaceae</taxon>
        <taxon>Botrytis</taxon>
    </lineage>
</organism>
<feature type="chain" id="PRO_0000365665" description="Adenylate kinase">
    <location>
        <begin position="1"/>
        <end position="275"/>
    </location>
</feature>
<feature type="region of interest" description="NMP" evidence="1">
    <location>
        <begin position="74"/>
        <end position="103"/>
    </location>
</feature>
<feature type="region of interest" description="LID" evidence="1">
    <location>
        <begin position="171"/>
        <end position="208"/>
    </location>
</feature>
<feature type="binding site" evidence="1">
    <location>
        <begin position="54"/>
        <end position="59"/>
    </location>
    <ligand>
        <name>ATP</name>
        <dbReference type="ChEBI" id="CHEBI:30616"/>
    </ligand>
</feature>
<feature type="binding site" evidence="1">
    <location>
        <position position="75"/>
    </location>
    <ligand>
        <name>AMP</name>
        <dbReference type="ChEBI" id="CHEBI:456215"/>
    </ligand>
</feature>
<feature type="binding site" evidence="1">
    <location>
        <position position="80"/>
    </location>
    <ligand>
        <name>AMP</name>
        <dbReference type="ChEBI" id="CHEBI:456215"/>
    </ligand>
</feature>
<feature type="binding site" evidence="1">
    <location>
        <begin position="101"/>
        <end position="103"/>
    </location>
    <ligand>
        <name>AMP</name>
        <dbReference type="ChEBI" id="CHEBI:456215"/>
    </ligand>
</feature>
<feature type="binding site" evidence="1">
    <location>
        <begin position="130"/>
        <end position="133"/>
    </location>
    <ligand>
        <name>AMP</name>
        <dbReference type="ChEBI" id="CHEBI:456215"/>
    </ligand>
</feature>
<feature type="binding site" evidence="1">
    <location>
        <position position="137"/>
    </location>
    <ligand>
        <name>AMP</name>
        <dbReference type="ChEBI" id="CHEBI:456215"/>
    </ligand>
</feature>
<feature type="binding site" evidence="1">
    <location>
        <position position="172"/>
    </location>
    <ligand>
        <name>ATP</name>
        <dbReference type="ChEBI" id="CHEBI:30616"/>
    </ligand>
</feature>
<feature type="binding site" evidence="1">
    <location>
        <begin position="181"/>
        <end position="182"/>
    </location>
    <ligand>
        <name>ATP</name>
        <dbReference type="ChEBI" id="CHEBI:30616"/>
    </ligand>
</feature>
<feature type="binding site" evidence="1">
    <location>
        <position position="205"/>
    </location>
    <ligand>
        <name>AMP</name>
        <dbReference type="ChEBI" id="CHEBI:456215"/>
    </ligand>
</feature>
<feature type="binding site" evidence="1">
    <location>
        <position position="216"/>
    </location>
    <ligand>
        <name>AMP</name>
        <dbReference type="ChEBI" id="CHEBI:456215"/>
    </ligand>
</feature>
<feature type="binding site" evidence="1">
    <location>
        <position position="244"/>
    </location>
    <ligand>
        <name>ATP</name>
        <dbReference type="ChEBI" id="CHEBI:30616"/>
    </ligand>
</feature>
<protein>
    <recommendedName>
        <fullName evidence="1">Adenylate kinase</fullName>
        <ecNumber evidence="1">2.7.4.3</ecNumber>
    </recommendedName>
    <alternativeName>
        <fullName evidence="1">ATP-AMP transphosphorylase</fullName>
    </alternativeName>
    <alternativeName>
        <fullName evidence="1">ATP:AMP phosphotransferase</fullName>
    </alternativeName>
    <alternativeName>
        <fullName evidence="1">Adenylate kinase cytosolic and mitochondrial</fullName>
    </alternativeName>
    <alternativeName>
        <fullName evidence="1">Adenylate monophosphate kinase</fullName>
    </alternativeName>
</protein>
<accession>A6RPU0</accession>
<accession>A0A384J899</accession>
<sequence>MAPIGDDASQTLHDLVNKLESRVKELEDKLAHAAGGPAPAASESVRMILMGPPGAGKGTQAPKIKEKFSCCHLATGDMLRSQVAKKTPLGREAKKIMDQGGLVSDEIVIGMIKAELEGNSECKGGFILDGFPRTVVQAERLDAMLAERNQKLQHAVELQIDDSLLVSRITGRLVHPASGRSYHRVFNPPKADMKDDITGEPLVSRSDDNADALKKRLVTYHAQTAPVVGYYQKTGIWSGIDASQEPGAVWKSLLGVFDKQKGANGSILSKITGRS</sequence>
<reference key="1">
    <citation type="journal article" date="2011" name="PLoS Genet.">
        <title>Genomic analysis of the necrotrophic fungal pathogens Sclerotinia sclerotiorum and Botrytis cinerea.</title>
        <authorList>
            <person name="Amselem J."/>
            <person name="Cuomo C.A."/>
            <person name="van Kan J.A.L."/>
            <person name="Viaud M."/>
            <person name="Benito E.P."/>
            <person name="Couloux A."/>
            <person name="Coutinho P.M."/>
            <person name="de Vries R.P."/>
            <person name="Dyer P.S."/>
            <person name="Fillinger S."/>
            <person name="Fournier E."/>
            <person name="Gout L."/>
            <person name="Hahn M."/>
            <person name="Kohn L."/>
            <person name="Lapalu N."/>
            <person name="Plummer K.M."/>
            <person name="Pradier J.-M."/>
            <person name="Quevillon E."/>
            <person name="Sharon A."/>
            <person name="Simon A."/>
            <person name="ten Have A."/>
            <person name="Tudzynski B."/>
            <person name="Tudzynski P."/>
            <person name="Wincker P."/>
            <person name="Andrew M."/>
            <person name="Anthouard V."/>
            <person name="Beever R.E."/>
            <person name="Beffa R."/>
            <person name="Benoit I."/>
            <person name="Bouzid O."/>
            <person name="Brault B."/>
            <person name="Chen Z."/>
            <person name="Choquer M."/>
            <person name="Collemare J."/>
            <person name="Cotton P."/>
            <person name="Danchin E.G."/>
            <person name="Da Silva C."/>
            <person name="Gautier A."/>
            <person name="Giraud C."/>
            <person name="Giraud T."/>
            <person name="Gonzalez C."/>
            <person name="Grossetete S."/>
            <person name="Gueldener U."/>
            <person name="Henrissat B."/>
            <person name="Howlett B.J."/>
            <person name="Kodira C."/>
            <person name="Kretschmer M."/>
            <person name="Lappartient A."/>
            <person name="Leroch M."/>
            <person name="Levis C."/>
            <person name="Mauceli E."/>
            <person name="Neuveglise C."/>
            <person name="Oeser B."/>
            <person name="Pearson M."/>
            <person name="Poulain J."/>
            <person name="Poussereau N."/>
            <person name="Quesneville H."/>
            <person name="Rascle C."/>
            <person name="Schumacher J."/>
            <person name="Segurens B."/>
            <person name="Sexton A."/>
            <person name="Silva E."/>
            <person name="Sirven C."/>
            <person name="Soanes D.M."/>
            <person name="Talbot N.J."/>
            <person name="Templeton M."/>
            <person name="Yandava C."/>
            <person name="Yarden O."/>
            <person name="Zeng Q."/>
            <person name="Rollins J.A."/>
            <person name="Lebrun M.-H."/>
            <person name="Dickman M."/>
        </authorList>
    </citation>
    <scope>NUCLEOTIDE SEQUENCE [LARGE SCALE GENOMIC DNA]</scope>
    <source>
        <strain>B05.10</strain>
    </source>
</reference>
<reference key="2">
    <citation type="journal article" date="2012" name="Eukaryot. Cell">
        <title>Genome update of Botrytis cinerea strains B05.10 and T4.</title>
        <authorList>
            <person name="Staats M."/>
            <person name="van Kan J.A.L."/>
        </authorList>
    </citation>
    <scope>NUCLEOTIDE SEQUENCE [LARGE SCALE GENOMIC DNA]</scope>
    <scope>GENOME REANNOTATION</scope>
    <source>
        <strain>B05.10</strain>
    </source>
</reference>
<reference key="3">
    <citation type="journal article" date="2017" name="Mol. Plant Pathol.">
        <title>A gapless genome sequence of the fungus Botrytis cinerea.</title>
        <authorList>
            <person name="van Kan J.A.L."/>
            <person name="Stassen J.H.M."/>
            <person name="Mosbach A."/>
            <person name="van der Lee T.A.J."/>
            <person name="Faino L."/>
            <person name="Farmer A.D."/>
            <person name="Papasotiriou D.G."/>
            <person name="Zhou S."/>
            <person name="Seidl M.F."/>
            <person name="Cottam E."/>
            <person name="Edel D."/>
            <person name="Hahn M."/>
            <person name="Schwartz D.C."/>
            <person name="Dietrich R.A."/>
            <person name="Widdison S."/>
            <person name="Scalliet G."/>
        </authorList>
    </citation>
    <scope>NUCLEOTIDE SEQUENCE [LARGE SCALE GENOMIC DNA]</scope>
    <scope>GENOME REANNOTATION</scope>
    <source>
        <strain>B05.10</strain>
    </source>
</reference>
<name>KAD2_BOTFB</name>
<dbReference type="EC" id="2.7.4.3" evidence="1"/>
<dbReference type="EMBL" id="CP009806">
    <property type="protein sequence ID" value="ATZ46918.1"/>
    <property type="molecule type" value="Genomic_DNA"/>
</dbReference>
<dbReference type="SMR" id="A6RPU0"/>
<dbReference type="EnsemblFungi" id="Bcin02g02610.1">
    <property type="protein sequence ID" value="Bcin02p02610.1"/>
    <property type="gene ID" value="Bcin02g02610"/>
</dbReference>
<dbReference type="GeneID" id="5439527"/>
<dbReference type="KEGG" id="bfu:BCIN_02g02610"/>
<dbReference type="VEuPathDB" id="FungiDB:Bcin02g02610"/>
<dbReference type="OMA" id="VYHEQTA"/>
<dbReference type="OrthoDB" id="439792at2759"/>
<dbReference type="Proteomes" id="UP000001798">
    <property type="component" value="Chromosome bcin02"/>
</dbReference>
<dbReference type="GO" id="GO:0005829">
    <property type="term" value="C:cytosol"/>
    <property type="evidence" value="ECO:0007669"/>
    <property type="project" value="UniProtKB-SubCell"/>
</dbReference>
<dbReference type="GO" id="GO:0005758">
    <property type="term" value="C:mitochondrial intermembrane space"/>
    <property type="evidence" value="ECO:0007669"/>
    <property type="project" value="UniProtKB-SubCell"/>
</dbReference>
<dbReference type="GO" id="GO:0004017">
    <property type="term" value="F:adenylate kinase activity"/>
    <property type="evidence" value="ECO:0007669"/>
    <property type="project" value="UniProtKB-UniRule"/>
</dbReference>
<dbReference type="GO" id="GO:0016208">
    <property type="term" value="F:AMP binding"/>
    <property type="evidence" value="ECO:0007669"/>
    <property type="project" value="EnsemblFungi"/>
</dbReference>
<dbReference type="GO" id="GO:0005524">
    <property type="term" value="F:ATP binding"/>
    <property type="evidence" value="ECO:0007669"/>
    <property type="project" value="UniProtKB-KW"/>
</dbReference>
<dbReference type="GO" id="GO:0003688">
    <property type="term" value="F:DNA replication origin binding"/>
    <property type="evidence" value="ECO:0007669"/>
    <property type="project" value="EnsemblFungi"/>
</dbReference>
<dbReference type="GO" id="GO:0006172">
    <property type="term" value="P:ADP biosynthetic process"/>
    <property type="evidence" value="ECO:0007669"/>
    <property type="project" value="UniProtKB-UniRule"/>
</dbReference>
<dbReference type="GO" id="GO:0046033">
    <property type="term" value="P:AMP metabolic process"/>
    <property type="evidence" value="ECO:0007669"/>
    <property type="project" value="UniProtKB-UniRule"/>
</dbReference>
<dbReference type="GO" id="GO:0046034">
    <property type="term" value="P:ATP metabolic process"/>
    <property type="evidence" value="ECO:0007669"/>
    <property type="project" value="UniProtKB-UniRule"/>
</dbReference>
<dbReference type="GO" id="GO:0006270">
    <property type="term" value="P:DNA replication initiation"/>
    <property type="evidence" value="ECO:0007669"/>
    <property type="project" value="EnsemblFungi"/>
</dbReference>
<dbReference type="GO" id="GO:0036388">
    <property type="term" value="P:pre-replicative complex assembly"/>
    <property type="evidence" value="ECO:0007669"/>
    <property type="project" value="EnsemblFungi"/>
</dbReference>
<dbReference type="CDD" id="cd01428">
    <property type="entry name" value="ADK"/>
    <property type="match status" value="1"/>
</dbReference>
<dbReference type="FunFam" id="3.40.50.300:FF:000106">
    <property type="entry name" value="Adenylate kinase mitochondrial"/>
    <property type="match status" value="1"/>
</dbReference>
<dbReference type="Gene3D" id="3.40.50.300">
    <property type="entry name" value="P-loop containing nucleotide triphosphate hydrolases"/>
    <property type="match status" value="1"/>
</dbReference>
<dbReference type="HAMAP" id="MF_00235">
    <property type="entry name" value="Adenylate_kinase_Adk"/>
    <property type="match status" value="1"/>
</dbReference>
<dbReference type="HAMAP" id="MF_03168">
    <property type="entry name" value="Adenylate_kinase_AK2"/>
    <property type="match status" value="1"/>
</dbReference>
<dbReference type="InterPro" id="IPR006259">
    <property type="entry name" value="Adenyl_kin_sub"/>
</dbReference>
<dbReference type="InterPro" id="IPR000850">
    <property type="entry name" value="Adenylat/UMP-CMP_kin"/>
</dbReference>
<dbReference type="InterPro" id="IPR033690">
    <property type="entry name" value="Adenylat_kinase_CS"/>
</dbReference>
<dbReference type="InterPro" id="IPR007862">
    <property type="entry name" value="Adenylate_kinase_lid-dom"/>
</dbReference>
<dbReference type="InterPro" id="IPR028587">
    <property type="entry name" value="AK2"/>
</dbReference>
<dbReference type="InterPro" id="IPR027417">
    <property type="entry name" value="P-loop_NTPase"/>
</dbReference>
<dbReference type="NCBIfam" id="TIGR01351">
    <property type="entry name" value="adk"/>
    <property type="match status" value="1"/>
</dbReference>
<dbReference type="NCBIfam" id="NF001381">
    <property type="entry name" value="PRK00279.1-3"/>
    <property type="match status" value="1"/>
</dbReference>
<dbReference type="NCBIfam" id="NF011100">
    <property type="entry name" value="PRK14527.1"/>
    <property type="match status" value="1"/>
</dbReference>
<dbReference type="PANTHER" id="PTHR23359">
    <property type="entry name" value="NUCLEOTIDE KINASE"/>
    <property type="match status" value="1"/>
</dbReference>
<dbReference type="Pfam" id="PF00406">
    <property type="entry name" value="ADK"/>
    <property type="match status" value="1"/>
</dbReference>
<dbReference type="Pfam" id="PF05191">
    <property type="entry name" value="ADK_lid"/>
    <property type="match status" value="1"/>
</dbReference>
<dbReference type="PRINTS" id="PR00094">
    <property type="entry name" value="ADENYLTKNASE"/>
</dbReference>
<dbReference type="SUPFAM" id="SSF52540">
    <property type="entry name" value="P-loop containing nucleoside triphosphate hydrolases"/>
    <property type="match status" value="1"/>
</dbReference>
<dbReference type="PROSITE" id="PS00113">
    <property type="entry name" value="ADENYLATE_KINASE"/>
    <property type="match status" value="1"/>
</dbReference>
<evidence type="ECO:0000255" key="1">
    <source>
        <dbReference type="HAMAP-Rule" id="MF_03168"/>
    </source>
</evidence>
<proteinExistence type="inferred from homology"/>
<gene>
    <name type="primary">adk1</name>
    <name type="ORF">BC1G_02463</name>
    <name type="ORF">BCIN_02g02610</name>
</gene>
<keyword id="KW-0067">ATP-binding</keyword>
<keyword id="KW-0963">Cytoplasm</keyword>
<keyword id="KW-0418">Kinase</keyword>
<keyword id="KW-0496">Mitochondrion</keyword>
<keyword id="KW-0547">Nucleotide-binding</keyword>
<keyword id="KW-1185">Reference proteome</keyword>
<keyword id="KW-0808">Transferase</keyword>
<comment type="function">
    <text evidence="1">Catalyzes the reversible transfer of the terminal phosphate group between ATP and AMP. Plays an important role in cellular energy homeostasis and in adenine nucleotide metabolism. Adenylate kinase activity is critical for regulation of the phosphate utilization and the AMP de novo biosynthesis pathways.</text>
</comment>
<comment type="catalytic activity">
    <reaction evidence="1">
        <text>AMP + ATP = 2 ADP</text>
        <dbReference type="Rhea" id="RHEA:12973"/>
        <dbReference type="ChEBI" id="CHEBI:30616"/>
        <dbReference type="ChEBI" id="CHEBI:456215"/>
        <dbReference type="ChEBI" id="CHEBI:456216"/>
        <dbReference type="EC" id="2.7.4.3"/>
    </reaction>
</comment>
<comment type="subunit">
    <text evidence="1">Monomer.</text>
</comment>
<comment type="subcellular location">
    <subcellularLocation>
        <location evidence="1">Cytoplasm</location>
        <location evidence="1">Cytosol</location>
    </subcellularLocation>
    <subcellularLocation>
        <location evidence="1">Mitochondrion intermembrane space</location>
    </subcellularLocation>
    <text evidence="1">Predominantly mitochondrial.</text>
</comment>
<comment type="domain">
    <text evidence="1">Consists of three domains, a large central CORE domain and two small peripheral domains, NMPbind and LID, which undergo movements during catalysis. The LID domain closes over the site of phosphoryl transfer upon ATP binding. Assembling and dissambling the active center during each catalytic cycle provides an effective means to prevent ATP hydrolysis.</text>
</comment>
<comment type="similarity">
    <text evidence="1">Belongs to the adenylate kinase family. AK2 subfamily.</text>
</comment>